<proteinExistence type="evidence at protein level"/>
<sequence length="205" mass="21825">MVSSCCGSVCSDQGCGLETCCRPSCCQTTCCRTTCCRPSCCVSSCCRPQCCQSVCCQPTCCRPSCCPSCCQTTCCRTTCCRPSCCVSSCCRPQCCQSVCCQPTCCRPSCSISSCCRPSCCVSRCCRSQCCQSVCCQPTCCRPSCCISSCCRPSCCESSCCRPCCCRPCCCLRPVCGRVSCHTTCYRPTCVISTCPRPLCCASSCC</sequence>
<organism>
    <name type="scientific">Homo sapiens</name>
    <name type="common">Human</name>
    <dbReference type="NCBI Taxonomy" id="9606"/>
    <lineage>
        <taxon>Eukaryota</taxon>
        <taxon>Metazoa</taxon>
        <taxon>Chordata</taxon>
        <taxon>Craniata</taxon>
        <taxon>Vertebrata</taxon>
        <taxon>Euteleostomi</taxon>
        <taxon>Mammalia</taxon>
        <taxon>Eutheria</taxon>
        <taxon>Euarchontoglires</taxon>
        <taxon>Primates</taxon>
        <taxon>Haplorrhini</taxon>
        <taxon>Catarrhini</taxon>
        <taxon>Hominidae</taxon>
        <taxon>Homo</taxon>
    </lineage>
</organism>
<reference key="1">
    <citation type="journal article" date="2006" name="Nature">
        <title>DNA sequence of human chromosome 17 and analysis of rearrangement in the human lineage.</title>
        <authorList>
            <person name="Zody M.C."/>
            <person name="Garber M."/>
            <person name="Adams D.J."/>
            <person name="Sharpe T."/>
            <person name="Harrow J."/>
            <person name="Lupski J.R."/>
            <person name="Nicholson C."/>
            <person name="Searle S.M."/>
            <person name="Wilming L."/>
            <person name="Young S.K."/>
            <person name="Abouelleil A."/>
            <person name="Allen N.R."/>
            <person name="Bi W."/>
            <person name="Bloom T."/>
            <person name="Borowsky M.L."/>
            <person name="Bugalter B.E."/>
            <person name="Butler J."/>
            <person name="Chang J.L."/>
            <person name="Chen C.-K."/>
            <person name="Cook A."/>
            <person name="Corum B."/>
            <person name="Cuomo C.A."/>
            <person name="de Jong P.J."/>
            <person name="DeCaprio D."/>
            <person name="Dewar K."/>
            <person name="FitzGerald M."/>
            <person name="Gilbert J."/>
            <person name="Gibson R."/>
            <person name="Gnerre S."/>
            <person name="Goldstein S."/>
            <person name="Grafham D.V."/>
            <person name="Grocock R."/>
            <person name="Hafez N."/>
            <person name="Hagopian D.S."/>
            <person name="Hart E."/>
            <person name="Norman C.H."/>
            <person name="Humphray S."/>
            <person name="Jaffe D.B."/>
            <person name="Jones M."/>
            <person name="Kamal M."/>
            <person name="Khodiyar V.K."/>
            <person name="LaButti K."/>
            <person name="Laird G."/>
            <person name="Lehoczky J."/>
            <person name="Liu X."/>
            <person name="Lokyitsang T."/>
            <person name="Loveland J."/>
            <person name="Lui A."/>
            <person name="Macdonald P."/>
            <person name="Major J.E."/>
            <person name="Matthews L."/>
            <person name="Mauceli E."/>
            <person name="McCarroll S.A."/>
            <person name="Mihalev A.H."/>
            <person name="Mudge J."/>
            <person name="Nguyen C."/>
            <person name="Nicol R."/>
            <person name="O'Leary S.B."/>
            <person name="Osoegawa K."/>
            <person name="Schwartz D.C."/>
            <person name="Shaw-Smith C."/>
            <person name="Stankiewicz P."/>
            <person name="Steward C."/>
            <person name="Swarbreck D."/>
            <person name="Venkataraman V."/>
            <person name="Whittaker C.A."/>
            <person name="Yang X."/>
            <person name="Zimmer A.R."/>
            <person name="Bradley A."/>
            <person name="Hubbard T."/>
            <person name="Birren B.W."/>
            <person name="Rogers J."/>
            <person name="Lander E.S."/>
            <person name="Nusbaum C."/>
        </authorList>
    </citation>
    <scope>NUCLEOTIDE SEQUENCE [LARGE SCALE GENOMIC DNA]</scope>
</reference>
<reference key="2">
    <citation type="journal article" date="2001" name="J. Biol. Chem.">
        <title>Characterization of a cluster of human high/ultrahigh sulfur keratin-associated protein genes embedded in the type I keratin gene domain on chromosome 17q12-21.</title>
        <authorList>
            <person name="Rogers M.A."/>
            <person name="Langbein L."/>
            <person name="Winter H."/>
            <person name="Ehmann C."/>
            <person name="Praetzel S."/>
            <person name="Korn B."/>
            <person name="Schweizer J."/>
        </authorList>
    </citation>
    <scope>NUCLEOTIDE SEQUENCE [MRNA] OF 13-205</scope>
    <source>
        <tissue>Scalp</tissue>
    </source>
</reference>
<reference key="3">
    <citation type="journal article" date="2005" name="J. Invest. Dermatol.">
        <title>Size polymorphisms in the human ultrahigh sulfur hair keratin-associated protein 4, KAP4, gene family.</title>
        <authorList>
            <person name="Kariya N."/>
            <person name="Shimomura Y."/>
            <person name="Ito M."/>
        </authorList>
    </citation>
    <scope>TISSUE SPECIFICITY</scope>
    <scope>POLYMORPHISM</scope>
</reference>
<keyword id="KW-0416">Keratin</keyword>
<keyword id="KW-1267">Proteomics identification</keyword>
<keyword id="KW-1185">Reference proteome</keyword>
<keyword id="KW-0677">Repeat</keyword>
<gene>
    <name type="primary">KRTAP4-6</name>
    <name type="synonym">KAP4.15</name>
    <name type="synonym">KRTAP4-15</name>
    <name type="synonym">KRTAP4.15</name>
    <name type="synonym">KRTAP4.6</name>
</gene>
<name>KRA46_HUMAN</name>
<evidence type="ECO:0000269" key="1">
    <source>
    </source>
</evidence>
<evidence type="ECO:0000305" key="2"/>
<comment type="function">
    <text>In the hair cortex, hair keratin intermediate filaments are embedded in an interfilamentous matrix, consisting of hair keratin-associated proteins (KRTAP), which are essential for the formation of a rigid and resistant hair shaft through their extensive disulfide bond cross-linking with abundant cysteine residues of hair keratins. The matrix proteins include the high-sulfur and high-glycine-tyrosine keratins.</text>
</comment>
<comment type="subunit">
    <text>Interacts with hair keratins.</text>
</comment>
<comment type="tissue specificity">
    <text evidence="1">Expressed in the hair follicles.</text>
</comment>
<comment type="polymorphism">
    <text evidence="1">Numerous size polymorphism are present in KRTAP4 gene family, which are mainly due to variations in the sequence encoding cysteine-rich repeat segments (PubMed:15955084). Allele shown is KAP4.15 (PubMed:15955084).</text>
</comment>
<comment type="similarity">
    <text evidence="2">Belongs to the KRTAP type 4 family.</text>
</comment>
<comment type="sequence caution" evidence="2">
    <conflict type="erroneous translation">
        <sequence resource="EMBL-CDS" id="CAC27577"/>
    </conflict>
    <text>Wrong choice of frame.</text>
</comment>
<feature type="chain" id="PRO_0000185181" description="Keratin-associated protein 4-6">
    <location>
        <begin position="1"/>
        <end position="205"/>
    </location>
</feature>
<feature type="repeat" description="1">
    <location>
        <begin position="20"/>
        <end position="24"/>
    </location>
</feature>
<feature type="repeat" description="2">
    <location>
        <begin position="25"/>
        <end position="29"/>
    </location>
</feature>
<feature type="repeat" description="3">
    <location>
        <begin position="30"/>
        <end position="34"/>
    </location>
</feature>
<feature type="repeat" description="4">
    <location>
        <begin position="35"/>
        <end position="39"/>
    </location>
</feature>
<feature type="repeat" description="5">
    <location>
        <begin position="40"/>
        <end position="44"/>
    </location>
</feature>
<feature type="repeat" description="6">
    <location>
        <begin position="45"/>
        <end position="49"/>
    </location>
</feature>
<feature type="repeat" description="7">
    <location>
        <begin position="50"/>
        <end position="54"/>
    </location>
</feature>
<feature type="repeat" description="8">
    <location>
        <begin position="55"/>
        <end position="59"/>
    </location>
</feature>
<feature type="repeat" description="9">
    <location>
        <begin position="60"/>
        <end position="64"/>
    </location>
</feature>
<feature type="repeat" description="10">
    <location>
        <begin position="65"/>
        <end position="68"/>
    </location>
</feature>
<feature type="repeat" description="11">
    <location>
        <begin position="69"/>
        <end position="73"/>
    </location>
</feature>
<feature type="repeat" description="12">
    <location>
        <begin position="74"/>
        <end position="78"/>
    </location>
</feature>
<feature type="repeat" description="13">
    <location>
        <begin position="79"/>
        <end position="83"/>
    </location>
</feature>
<feature type="repeat" description="14">
    <location>
        <begin position="84"/>
        <end position="88"/>
    </location>
</feature>
<feature type="repeat" description="15">
    <location>
        <begin position="89"/>
        <end position="93"/>
    </location>
</feature>
<feature type="repeat" description="16">
    <location>
        <begin position="94"/>
        <end position="98"/>
    </location>
</feature>
<feature type="repeat" description="17">
    <location>
        <begin position="99"/>
        <end position="103"/>
    </location>
</feature>
<feature type="repeat" description="18">
    <location>
        <begin position="104"/>
        <end position="108"/>
    </location>
</feature>
<feature type="repeat" description="19">
    <location>
        <begin position="114"/>
        <end position="118"/>
    </location>
</feature>
<feature type="repeat" description="20">
    <location>
        <begin position="119"/>
        <end position="123"/>
    </location>
</feature>
<feature type="repeat" description="21">
    <location>
        <begin position="124"/>
        <end position="128"/>
    </location>
</feature>
<feature type="repeat" description="22">
    <location>
        <begin position="129"/>
        <end position="133"/>
    </location>
</feature>
<feature type="repeat" description="23">
    <location>
        <begin position="134"/>
        <end position="138"/>
    </location>
</feature>
<feature type="repeat" description="24">
    <location>
        <begin position="139"/>
        <end position="143"/>
    </location>
</feature>
<feature type="repeat" description="25">
    <location>
        <begin position="144"/>
        <end position="148"/>
    </location>
</feature>
<feature type="repeat" description="26">
    <location>
        <begin position="149"/>
        <end position="153"/>
    </location>
</feature>
<feature type="repeat" description="27">
    <location>
        <begin position="154"/>
        <end position="158"/>
    </location>
</feature>
<feature type="repeat" description="28">
    <location>
        <begin position="159"/>
        <end position="163"/>
    </location>
</feature>
<feature type="repeat" description="29">
    <location>
        <begin position="164"/>
        <end position="168"/>
    </location>
</feature>
<feature type="repeat" description="30">
    <location>
        <begin position="169"/>
        <end position="173"/>
    </location>
</feature>
<feature type="region of interest" description="30 X 5 AA repeats of C-C-[IRQVEL]-[SPTR]-[STVQRCP]">
    <location>
        <begin position="20"/>
        <end position="173"/>
    </location>
</feature>
<protein>
    <recommendedName>
        <fullName>Keratin-associated protein 4-6</fullName>
    </recommendedName>
    <alternativeName>
        <fullName>Keratin-associated protein 4-15</fullName>
    </alternativeName>
    <alternativeName>
        <fullName>Keratin-associated protein 4.15</fullName>
    </alternativeName>
    <alternativeName>
        <fullName>Keratin-associated protein 4.6</fullName>
    </alternativeName>
    <alternativeName>
        <fullName>Ultrahigh sulfur keratin-associated protein 4.15</fullName>
    </alternativeName>
</protein>
<dbReference type="EMBL" id="AC100808">
    <property type="status" value="NOT_ANNOTATED_CDS"/>
    <property type="molecule type" value="Genomic_DNA"/>
</dbReference>
<dbReference type="EMBL" id="AJ406945">
    <property type="protein sequence ID" value="CAC27584.1"/>
    <property type="molecule type" value="mRNA"/>
</dbReference>
<dbReference type="EMBL" id="AJ406938">
    <property type="protein sequence ID" value="CAC27577.1"/>
    <property type="status" value="ALT_SEQ"/>
    <property type="molecule type" value="mRNA"/>
</dbReference>
<dbReference type="CCDS" id="CCDS54125.1"/>
<dbReference type="RefSeq" id="NP_112238.1">
    <property type="nucleotide sequence ID" value="NM_030976.2"/>
</dbReference>
<dbReference type="FunCoup" id="Q9BYQ5">
    <property type="interactions" value="28"/>
</dbReference>
<dbReference type="PhosphoSitePlus" id="Q9BYQ5"/>
<dbReference type="BioMuta" id="KRTAP4-6"/>
<dbReference type="DMDM" id="322510121"/>
<dbReference type="MassIVE" id="Q9BYQ5"/>
<dbReference type="PeptideAtlas" id="Q9BYQ5"/>
<dbReference type="ProteomicsDB" id="79685"/>
<dbReference type="Antibodypedia" id="81657">
    <property type="antibodies" value="1 antibodies from 1 providers"/>
</dbReference>
<dbReference type="DNASU" id="81871"/>
<dbReference type="Ensembl" id="ENST00000345847.5">
    <property type="protein sequence ID" value="ENSP00000328270.5"/>
    <property type="gene ID" value="ENSG00000198090.4"/>
</dbReference>
<dbReference type="Ensembl" id="ENST00000709615.1">
    <property type="protein sequence ID" value="ENSP00000517800.1"/>
    <property type="gene ID" value="ENSG00000292051.1"/>
</dbReference>
<dbReference type="GeneID" id="81871"/>
<dbReference type="KEGG" id="hsa:81871"/>
<dbReference type="MANE-Select" id="ENST00000345847.5">
    <property type="protein sequence ID" value="ENSP00000328270.5"/>
    <property type="RefSeq nucleotide sequence ID" value="NM_030976.2"/>
    <property type="RefSeq protein sequence ID" value="NP_112238.1"/>
</dbReference>
<dbReference type="UCSC" id="uc060fas.1">
    <property type="organism name" value="human"/>
</dbReference>
<dbReference type="AGR" id="HGNC:18909"/>
<dbReference type="CTD" id="81871"/>
<dbReference type="GeneCards" id="KRTAP4-6"/>
<dbReference type="HGNC" id="HGNC:18909">
    <property type="gene designation" value="KRTAP4-6"/>
</dbReference>
<dbReference type="HPA" id="ENSG00000198090">
    <property type="expression patterns" value="Tissue enriched (skin)"/>
</dbReference>
<dbReference type="neXtProt" id="NX_Q9BYQ5"/>
<dbReference type="OpenTargets" id="ENSG00000198090"/>
<dbReference type="VEuPathDB" id="HostDB:ENSG00000198090"/>
<dbReference type="eggNOG" id="KOG4726">
    <property type="taxonomic scope" value="Eukaryota"/>
</dbReference>
<dbReference type="GeneTree" id="ENSGT00940000159486"/>
<dbReference type="HOGENOM" id="CLU_113141_2_0_1"/>
<dbReference type="InParanoid" id="Q9BYQ5"/>
<dbReference type="OMA" id="QCARTAS"/>
<dbReference type="PAN-GO" id="Q9BYQ5">
    <property type="GO annotations" value="0 GO annotations based on evolutionary models"/>
</dbReference>
<dbReference type="TreeFam" id="TF351356"/>
<dbReference type="PathwayCommons" id="Q9BYQ5"/>
<dbReference type="Reactome" id="R-HSA-6805567">
    <property type="pathway name" value="Keratinization"/>
</dbReference>
<dbReference type="BioGRID-ORCS" id="81871">
    <property type="hits" value="35 hits in 1035 CRISPR screens"/>
</dbReference>
<dbReference type="GenomeRNAi" id="81871"/>
<dbReference type="Pharos" id="Q9BYQ5">
    <property type="development level" value="Tdark"/>
</dbReference>
<dbReference type="PRO" id="PR:Q9BYQ5"/>
<dbReference type="Proteomes" id="UP000005640">
    <property type="component" value="Chromosome 17"/>
</dbReference>
<dbReference type="RNAct" id="Q9BYQ5">
    <property type="molecule type" value="protein"/>
</dbReference>
<dbReference type="Bgee" id="ENSG00000198090">
    <property type="expression patterns" value="Expressed in upper arm skin and 27 other cell types or tissues"/>
</dbReference>
<dbReference type="GO" id="GO:0005829">
    <property type="term" value="C:cytosol"/>
    <property type="evidence" value="ECO:0000304"/>
    <property type="project" value="Reactome"/>
</dbReference>
<dbReference type="GO" id="GO:0045095">
    <property type="term" value="C:keratin filament"/>
    <property type="evidence" value="ECO:0007669"/>
    <property type="project" value="InterPro"/>
</dbReference>
<dbReference type="InterPro" id="IPR002494">
    <property type="entry name" value="KAP"/>
</dbReference>
<dbReference type="PANTHER" id="PTHR23262">
    <property type="entry name" value="KERATIN ASSOCIATED PROTEIN"/>
    <property type="match status" value="1"/>
</dbReference>
<dbReference type="PANTHER" id="PTHR23262:SF248">
    <property type="entry name" value="KERATIN-ASSOCIATED PROTEIN 4-6"/>
    <property type="match status" value="1"/>
</dbReference>
<dbReference type="Pfam" id="PF13885">
    <property type="entry name" value="Keratin_B2_2"/>
    <property type="match status" value="3"/>
</dbReference>
<accession>Q9BYQ5</accession>
<accession>Q9BYR1</accession>